<feature type="chain" id="PRO_0000461209" description="Aldo-keto reductase 1B">
    <location>
        <begin position="1"/>
        <end position="350"/>
    </location>
</feature>
<feature type="active site" description="Proton donor" evidence="2">
    <location>
        <position position="84"/>
    </location>
</feature>
<feature type="binding site" evidence="3">
    <location>
        <position position="146"/>
    </location>
    <ligand>
        <name>substrate</name>
    </ligand>
</feature>
<feature type="binding site" evidence="1">
    <location>
        <begin position="244"/>
        <end position="306"/>
    </location>
    <ligand>
        <name>NADP(+)</name>
        <dbReference type="ChEBI" id="CHEBI:58349"/>
    </ligand>
</feature>
<feature type="site" description="Lowers pKa of active site Tyr" evidence="4">
    <location>
        <position position="113"/>
    </location>
</feature>
<feature type="splice variant" id="VSP_062421" description="In isoform D and isoform A.">
    <original>MNTLMKIQLVRPVFRITLRNYGKPERFMWCQKEYARAPKVVCLDGNEIPV</original>
    <variation>MAVPNVKFNNGKEVPI</variation>
    <location>
        <begin position="1"/>
        <end position="50"/>
    </location>
</feature>
<feature type="splice variant" id="VSP_062422" description="In isoform D and isoform A.">
    <original>FN</original>
    <variation>WG</variation>
    <location>
        <begin position="56"/>
        <end position="57"/>
    </location>
</feature>
<feature type="splice variant" id="VSP_062423" description="In isoform D and isoform B.">
    <original>NQYGHPHHPFEK</original>
    <variation>KDAGTHKYYPFH</variation>
    <location>
        <begin position="336"/>
        <end position="347"/>
    </location>
</feature>
<organism evidence="12">
    <name type="scientific">Drosophila melanogaster</name>
    <name type="common">Fruit fly</name>
    <dbReference type="NCBI Taxonomy" id="7227"/>
    <lineage>
        <taxon>Eukaryota</taxon>
        <taxon>Metazoa</taxon>
        <taxon>Ecdysozoa</taxon>
        <taxon>Arthropoda</taxon>
        <taxon>Hexapoda</taxon>
        <taxon>Insecta</taxon>
        <taxon>Pterygota</taxon>
        <taxon>Neoptera</taxon>
        <taxon>Endopterygota</taxon>
        <taxon>Diptera</taxon>
        <taxon>Brachycera</taxon>
        <taxon>Muscomorpha</taxon>
        <taxon>Ephydroidea</taxon>
        <taxon>Drosophilidae</taxon>
        <taxon>Drosophila</taxon>
        <taxon>Sophophora</taxon>
    </lineage>
</organism>
<proteinExistence type="evidence at transcript level"/>
<sequence>MNTLMKIQLVRPVFRITLRNYGKPERFMWCQKEYARAPKVVCLDGNEIPVIGLGTFNSPKGQVTEAVKVAIDAGYRHIDCAYVYQNEDEVGDGVEAKIKEGVVKREDLFITSKLWNTFHRPDLVKSALENTLSSLKLKYLDLYLIHWPMGYKEGCDLFPTDKDGKTLYSPVDYVDTWKAMEKLVEEGLVKSIGVSNFNRRQIERVLEVATIPPVTNQIECHPYLTQKKLIDFCKSKDITITAYSPLGSPNRPWAKAGDPVILEEAKIKEIAAKKKKTPGQILIRYQVQRANIVIPKSVTKDRIESNFQVFDFELTPEEIEIIESFECNGRLVPLLNQYGHPHHPFEKDEY</sequence>
<dbReference type="EC" id="1.1.1.21" evidence="1"/>
<dbReference type="EC" id="1.1.1.300" evidence="1"/>
<dbReference type="EC" id="1.1.1.372" evidence="1"/>
<dbReference type="EC" id="1.1.1.54" evidence="1"/>
<dbReference type="EMBL" id="AE014296">
    <property type="protein sequence ID" value="AAF50039.2"/>
    <property type="molecule type" value="Genomic_DNA"/>
</dbReference>
<dbReference type="EMBL" id="AE014296">
    <property type="protein sequence ID" value="AAN11878.1"/>
    <property type="molecule type" value="Genomic_DNA"/>
</dbReference>
<dbReference type="EMBL" id="AE014296">
    <property type="protein sequence ID" value="AGB94410.1"/>
    <property type="molecule type" value="Genomic_DNA"/>
</dbReference>
<dbReference type="EMBL" id="AE014296">
    <property type="protein sequence ID" value="AGB94411.1"/>
    <property type="molecule type" value="Genomic_DNA"/>
</dbReference>
<dbReference type="EMBL" id="BT003280">
    <property type="protein sequence ID" value="AAO25037.1"/>
    <property type="molecule type" value="mRNA"/>
</dbReference>
<dbReference type="EMBL" id="BT011413">
    <property type="protein sequence ID" value="AAR96205.1"/>
    <property type="molecule type" value="mRNA"/>
</dbReference>
<dbReference type="RefSeq" id="NP_001261716.1">
    <molecule id="M9PF61-1"/>
    <property type="nucleotide sequence ID" value="NM_001274787.1"/>
</dbReference>
<dbReference type="RefSeq" id="NP_001261717.1">
    <molecule id="M9PF61-2"/>
    <property type="nucleotide sequence ID" value="NM_001274788.1"/>
</dbReference>
<dbReference type="RefSeq" id="NP_648484.1">
    <molecule id="M9PF61-4"/>
    <property type="nucleotide sequence ID" value="NM_140227.2"/>
</dbReference>
<dbReference type="RefSeq" id="NP_729726.1">
    <molecule id="M9PF61-3"/>
    <property type="nucleotide sequence ID" value="NM_168467.2"/>
</dbReference>
<dbReference type="SMR" id="M9PF61"/>
<dbReference type="FunCoup" id="M9PF61">
    <property type="interactions" value="1091"/>
</dbReference>
<dbReference type="IntAct" id="M9PF61">
    <property type="interactions" value="205"/>
</dbReference>
<dbReference type="GlyGen" id="M9PF61">
    <property type="glycosylation" value="1 site, 1 O-linked glycan (1 site)"/>
</dbReference>
<dbReference type="PaxDb" id="7227-FBpp0075869"/>
<dbReference type="DNASU" id="39304"/>
<dbReference type="EnsemblMetazoa" id="FBtr0076138">
    <molecule id="M9PF61-3"/>
    <property type="protein sequence ID" value="FBpp0075869"/>
    <property type="gene ID" value="FBgn0086254"/>
</dbReference>
<dbReference type="EnsemblMetazoa" id="FBtr0076139">
    <molecule id="M9PF61-4"/>
    <property type="protein sequence ID" value="FBpp0075870"/>
    <property type="gene ID" value="FBgn0086254"/>
</dbReference>
<dbReference type="EnsemblMetazoa" id="FBtr0331546">
    <molecule id="M9PF61-1"/>
    <property type="protein sequence ID" value="FBpp0303936"/>
    <property type="gene ID" value="FBgn0086254"/>
</dbReference>
<dbReference type="EnsemblMetazoa" id="FBtr0331547">
    <molecule id="M9PF61-2"/>
    <property type="protein sequence ID" value="FBpp0303937"/>
    <property type="gene ID" value="FBgn0086254"/>
</dbReference>
<dbReference type="GeneID" id="39304"/>
<dbReference type="KEGG" id="dme:Dmel_CG6084"/>
<dbReference type="AGR" id="FB:FBgn0086254"/>
<dbReference type="CTD" id="39304"/>
<dbReference type="FlyBase" id="FBgn0086254">
    <property type="gene designation" value="Ar1"/>
</dbReference>
<dbReference type="VEuPathDB" id="VectorBase:FBgn0086254"/>
<dbReference type="eggNOG" id="KOG1577">
    <property type="taxonomic scope" value="Eukaryota"/>
</dbReference>
<dbReference type="GeneTree" id="ENSGT00940000153272"/>
<dbReference type="HOGENOM" id="CLU_023205_0_0_1"/>
<dbReference type="InParanoid" id="M9PF61"/>
<dbReference type="OMA" id="VHWPSEG"/>
<dbReference type="OrthoDB" id="416253at2759"/>
<dbReference type="Reactome" id="R-DME-156590">
    <property type="pathway name" value="Glutathione conjugation"/>
</dbReference>
<dbReference type="Reactome" id="R-DME-193144">
    <property type="pathway name" value="Estrogen biosynthesis"/>
</dbReference>
<dbReference type="Reactome" id="R-DME-193368">
    <property type="pathway name" value="Synthesis of bile acids and bile salts via 7alpha-hydroxycholesterol"/>
</dbReference>
<dbReference type="Reactome" id="R-DME-193775">
    <property type="pathway name" value="Synthesis of bile acids and bile salts via 24-hydroxycholesterol"/>
</dbReference>
<dbReference type="Reactome" id="R-DME-193807">
    <property type="pathway name" value="Synthesis of bile acids and bile salts via 27-hydroxycholesterol"/>
</dbReference>
<dbReference type="Reactome" id="R-DME-196108">
    <property type="pathway name" value="Pregnenolone biosynthesis"/>
</dbReference>
<dbReference type="Reactome" id="R-DME-2162123">
    <property type="pathway name" value="Synthesis of Prostaglandins (PG) and Thromboxanes (TX)"/>
</dbReference>
<dbReference type="Reactome" id="R-DME-5365859">
    <property type="pathway name" value="RA biosynthesis pathway"/>
</dbReference>
<dbReference type="Reactome" id="R-DME-5652227">
    <property type="pathway name" value="Fructose biosynthesis"/>
</dbReference>
<dbReference type="Reactome" id="R-DME-5661270">
    <property type="pathway name" value="Formation of xylulose-5-phosphate"/>
</dbReference>
<dbReference type="Reactome" id="R-DME-975634">
    <property type="pathway name" value="Retinoid metabolism and transport"/>
</dbReference>
<dbReference type="Reactome" id="R-DME-9757110">
    <property type="pathway name" value="Prednisone ADME"/>
</dbReference>
<dbReference type="BioGRID-ORCS" id="39304">
    <property type="hits" value="0 hits in 3 CRISPR screens"/>
</dbReference>
<dbReference type="Proteomes" id="UP000000803">
    <property type="component" value="Chromosome 3L"/>
</dbReference>
<dbReference type="Bgee" id="FBgn0086254">
    <property type="expression patterns" value="Expressed in secondary oocyte and 173 other cell types or tissues"/>
</dbReference>
<dbReference type="ExpressionAtlas" id="M9PF61">
    <property type="expression patterns" value="baseline and differential"/>
</dbReference>
<dbReference type="GO" id="GO:0005829">
    <property type="term" value="C:cytosol"/>
    <property type="evidence" value="ECO:0007005"/>
    <property type="project" value="FlyBase"/>
</dbReference>
<dbReference type="GO" id="GO:0005615">
    <property type="term" value="C:extracellular space"/>
    <property type="evidence" value="ECO:0000314"/>
    <property type="project" value="FlyBase"/>
</dbReference>
<dbReference type="GO" id="GO:0005739">
    <property type="term" value="C:mitochondrion"/>
    <property type="evidence" value="ECO:0000250"/>
    <property type="project" value="FlyBase"/>
</dbReference>
<dbReference type="GO" id="GO:0005654">
    <property type="term" value="C:nucleoplasm"/>
    <property type="evidence" value="ECO:0007005"/>
    <property type="project" value="FlyBase"/>
</dbReference>
<dbReference type="GO" id="GO:0004032">
    <property type="term" value="F:aldose reductase (NADPH) activity"/>
    <property type="evidence" value="ECO:0000314"/>
    <property type="project" value="FlyBase"/>
</dbReference>
<dbReference type="GO" id="GO:0052650">
    <property type="term" value="F:all-trans-retinol dehydrogenase (NADP+) activity"/>
    <property type="evidence" value="ECO:0007669"/>
    <property type="project" value="RHEA"/>
</dbReference>
<dbReference type="GO" id="GO:0047655">
    <property type="term" value="F:allyl-alcohol dehydrogenase activity"/>
    <property type="evidence" value="ECO:0007669"/>
    <property type="project" value="RHEA"/>
</dbReference>
<dbReference type="GO" id="GO:0047956">
    <property type="term" value="F:glycerol dehydrogenase (NADP+) activity"/>
    <property type="evidence" value="ECO:0007669"/>
    <property type="project" value="RHEA"/>
</dbReference>
<dbReference type="GO" id="GO:0047718">
    <property type="term" value="F:indanol dehydrogenase activity"/>
    <property type="evidence" value="ECO:0007669"/>
    <property type="project" value="UniProtKB-EC"/>
</dbReference>
<dbReference type="GO" id="GO:0047939">
    <property type="term" value="F:L-glucuronate reductase activity"/>
    <property type="evidence" value="ECO:0000250"/>
    <property type="project" value="FlyBase"/>
</dbReference>
<dbReference type="GO" id="GO:0036130">
    <property type="term" value="F:prostaglandin H2 endoperoxidase reductase activity"/>
    <property type="evidence" value="ECO:0007669"/>
    <property type="project" value="RHEA"/>
</dbReference>
<dbReference type="GO" id="GO:0019640">
    <property type="term" value="P:D-glucuronate catabolic process to D-xylulose 5-phosphate"/>
    <property type="evidence" value="ECO:0000250"/>
    <property type="project" value="FlyBase"/>
</dbReference>
<dbReference type="GO" id="GO:0046370">
    <property type="term" value="P:fructose biosynthetic process"/>
    <property type="evidence" value="ECO:0000316"/>
    <property type="project" value="FlyBase"/>
</dbReference>
<dbReference type="GO" id="GO:0046173">
    <property type="term" value="P:polyol biosynthetic process"/>
    <property type="evidence" value="ECO:0000315"/>
    <property type="project" value="FlyBase"/>
</dbReference>
<dbReference type="GO" id="GO:0006061">
    <property type="term" value="P:sorbitol biosynthetic process"/>
    <property type="evidence" value="ECO:0000316"/>
    <property type="project" value="FlyBase"/>
</dbReference>
<dbReference type="FunFam" id="3.20.20.100:FF:000006">
    <property type="entry name" value="Aldo-keto reductase family 1 member A1"/>
    <property type="match status" value="1"/>
</dbReference>
<dbReference type="Gene3D" id="3.20.20.100">
    <property type="entry name" value="NADP-dependent oxidoreductase domain"/>
    <property type="match status" value="1"/>
</dbReference>
<dbReference type="InterPro" id="IPR020471">
    <property type="entry name" value="AKR"/>
</dbReference>
<dbReference type="InterPro" id="IPR018170">
    <property type="entry name" value="Aldo/ket_reductase_CS"/>
</dbReference>
<dbReference type="InterPro" id="IPR023210">
    <property type="entry name" value="NADP_OxRdtase_dom"/>
</dbReference>
<dbReference type="InterPro" id="IPR036812">
    <property type="entry name" value="NADP_OxRdtase_dom_sf"/>
</dbReference>
<dbReference type="PANTHER" id="PTHR11732">
    <property type="entry name" value="ALDO/KETO REDUCTASE"/>
    <property type="match status" value="1"/>
</dbReference>
<dbReference type="Pfam" id="PF00248">
    <property type="entry name" value="Aldo_ket_red"/>
    <property type="match status" value="1"/>
</dbReference>
<dbReference type="PIRSF" id="PIRSF000097">
    <property type="entry name" value="AKR"/>
    <property type="match status" value="1"/>
</dbReference>
<dbReference type="PRINTS" id="PR00069">
    <property type="entry name" value="ALDKETRDTASE"/>
</dbReference>
<dbReference type="SUPFAM" id="SSF51430">
    <property type="entry name" value="NAD(P)-linked oxidoreductase"/>
    <property type="match status" value="1"/>
</dbReference>
<dbReference type="PROSITE" id="PS00798">
    <property type="entry name" value="ALDOKETO_REDUCTASE_1"/>
    <property type="match status" value="1"/>
</dbReference>
<dbReference type="PROSITE" id="PS00062">
    <property type="entry name" value="ALDOKETO_REDUCTASE_2"/>
    <property type="match status" value="1"/>
</dbReference>
<dbReference type="PROSITE" id="PS00063">
    <property type="entry name" value="ALDOKETO_REDUCTASE_3"/>
    <property type="match status" value="1"/>
</dbReference>
<gene>
    <name evidence="7 11" type="primary">Ar1</name>
    <name evidence="11" type="synonym">Akr1B</name>
    <name evidence="11" type="ORF">CG6084</name>
</gene>
<name>ALDR_DROME</name>
<evidence type="ECO:0000250" key="1">
    <source>
        <dbReference type="UniProtKB" id="P15121"/>
    </source>
</evidence>
<evidence type="ECO:0000255" key="2">
    <source>
        <dbReference type="PIRSR" id="PIRSR000097-1"/>
    </source>
</evidence>
<evidence type="ECO:0000255" key="3">
    <source>
        <dbReference type="PIRSR" id="PIRSR000097-2"/>
    </source>
</evidence>
<evidence type="ECO:0000255" key="4">
    <source>
        <dbReference type="PIRSR" id="PIRSR000097-3"/>
    </source>
</evidence>
<evidence type="ECO:0000269" key="5">
    <source>
    </source>
</evidence>
<evidence type="ECO:0000269" key="6">
    <source>
    </source>
</evidence>
<evidence type="ECO:0000303" key="7">
    <source>
    </source>
</evidence>
<evidence type="ECO:0000305" key="8"/>
<evidence type="ECO:0000312" key="9">
    <source>
        <dbReference type="EMBL" id="AAO25037.1"/>
    </source>
</evidence>
<evidence type="ECO:0000312" key="10">
    <source>
        <dbReference type="EMBL" id="AAR96205.1"/>
    </source>
</evidence>
<evidence type="ECO:0000312" key="11">
    <source>
        <dbReference type="FlyBase" id="FBgn0086254"/>
    </source>
</evidence>
<evidence type="ECO:0000312" key="12">
    <source>
        <dbReference type="Proteomes" id="UP000000803"/>
    </source>
</evidence>
<protein>
    <recommendedName>
        <fullName evidence="11">Aldo-keto reductase 1B</fullName>
        <ecNumber evidence="1">1.1.1.21</ecNumber>
        <ecNumber evidence="1">1.1.1.300</ecNumber>
        <ecNumber evidence="1">1.1.1.372</ecNumber>
        <ecNumber evidence="1">1.1.1.54</ecNumber>
    </recommendedName>
    <alternativeName>
        <fullName evidence="7">Aldose reductase</fullName>
        <shortName evidence="7">dAR1</shortName>
    </alternativeName>
</protein>
<reference evidence="12" key="1">
    <citation type="journal article" date="2000" name="Science">
        <title>The genome sequence of Drosophila melanogaster.</title>
        <authorList>
            <person name="Adams M.D."/>
            <person name="Celniker S.E."/>
            <person name="Holt R.A."/>
            <person name="Evans C.A."/>
            <person name="Gocayne J.D."/>
            <person name="Amanatides P.G."/>
            <person name="Scherer S.E."/>
            <person name="Li P.W."/>
            <person name="Hoskins R.A."/>
            <person name="Galle R.F."/>
            <person name="George R.A."/>
            <person name="Lewis S.E."/>
            <person name="Richards S."/>
            <person name="Ashburner M."/>
            <person name="Henderson S.N."/>
            <person name="Sutton G.G."/>
            <person name="Wortman J.R."/>
            <person name="Yandell M.D."/>
            <person name="Zhang Q."/>
            <person name="Chen L.X."/>
            <person name="Brandon R.C."/>
            <person name="Rogers Y.-H.C."/>
            <person name="Blazej R.G."/>
            <person name="Champe M."/>
            <person name="Pfeiffer B.D."/>
            <person name="Wan K.H."/>
            <person name="Doyle C."/>
            <person name="Baxter E.G."/>
            <person name="Helt G."/>
            <person name="Nelson C.R."/>
            <person name="Miklos G.L.G."/>
            <person name="Abril J.F."/>
            <person name="Agbayani A."/>
            <person name="An H.-J."/>
            <person name="Andrews-Pfannkoch C."/>
            <person name="Baldwin D."/>
            <person name="Ballew R.M."/>
            <person name="Basu A."/>
            <person name="Baxendale J."/>
            <person name="Bayraktaroglu L."/>
            <person name="Beasley E.M."/>
            <person name="Beeson K.Y."/>
            <person name="Benos P.V."/>
            <person name="Berman B.P."/>
            <person name="Bhandari D."/>
            <person name="Bolshakov S."/>
            <person name="Borkova D."/>
            <person name="Botchan M.R."/>
            <person name="Bouck J."/>
            <person name="Brokstein P."/>
            <person name="Brottier P."/>
            <person name="Burtis K.C."/>
            <person name="Busam D.A."/>
            <person name="Butler H."/>
            <person name="Cadieu E."/>
            <person name="Center A."/>
            <person name="Chandra I."/>
            <person name="Cherry J.M."/>
            <person name="Cawley S."/>
            <person name="Dahlke C."/>
            <person name="Davenport L.B."/>
            <person name="Davies P."/>
            <person name="de Pablos B."/>
            <person name="Delcher A."/>
            <person name="Deng Z."/>
            <person name="Mays A.D."/>
            <person name="Dew I."/>
            <person name="Dietz S.M."/>
            <person name="Dodson K."/>
            <person name="Doup L.E."/>
            <person name="Downes M."/>
            <person name="Dugan-Rocha S."/>
            <person name="Dunkov B.C."/>
            <person name="Dunn P."/>
            <person name="Durbin K.J."/>
            <person name="Evangelista C.C."/>
            <person name="Ferraz C."/>
            <person name="Ferriera S."/>
            <person name="Fleischmann W."/>
            <person name="Fosler C."/>
            <person name="Gabrielian A.E."/>
            <person name="Garg N.S."/>
            <person name="Gelbart W.M."/>
            <person name="Glasser K."/>
            <person name="Glodek A."/>
            <person name="Gong F."/>
            <person name="Gorrell J.H."/>
            <person name="Gu Z."/>
            <person name="Guan P."/>
            <person name="Harris M."/>
            <person name="Harris N.L."/>
            <person name="Harvey D.A."/>
            <person name="Heiman T.J."/>
            <person name="Hernandez J.R."/>
            <person name="Houck J."/>
            <person name="Hostin D."/>
            <person name="Houston K.A."/>
            <person name="Howland T.J."/>
            <person name="Wei M.-H."/>
            <person name="Ibegwam C."/>
            <person name="Jalali M."/>
            <person name="Kalush F."/>
            <person name="Karpen G.H."/>
            <person name="Ke Z."/>
            <person name="Kennison J.A."/>
            <person name="Ketchum K.A."/>
            <person name="Kimmel B.E."/>
            <person name="Kodira C.D."/>
            <person name="Kraft C.L."/>
            <person name="Kravitz S."/>
            <person name="Kulp D."/>
            <person name="Lai Z."/>
            <person name="Lasko P."/>
            <person name="Lei Y."/>
            <person name="Levitsky A.A."/>
            <person name="Li J.H."/>
            <person name="Li Z."/>
            <person name="Liang Y."/>
            <person name="Lin X."/>
            <person name="Liu X."/>
            <person name="Mattei B."/>
            <person name="McIntosh T.C."/>
            <person name="McLeod M.P."/>
            <person name="McPherson D."/>
            <person name="Merkulov G."/>
            <person name="Milshina N.V."/>
            <person name="Mobarry C."/>
            <person name="Morris J."/>
            <person name="Moshrefi A."/>
            <person name="Mount S.M."/>
            <person name="Moy M."/>
            <person name="Murphy B."/>
            <person name="Murphy L."/>
            <person name="Muzny D.M."/>
            <person name="Nelson D.L."/>
            <person name="Nelson D.R."/>
            <person name="Nelson K.A."/>
            <person name="Nixon K."/>
            <person name="Nusskern D.R."/>
            <person name="Pacleb J.M."/>
            <person name="Palazzolo M."/>
            <person name="Pittman G.S."/>
            <person name="Pan S."/>
            <person name="Pollard J."/>
            <person name="Puri V."/>
            <person name="Reese M.G."/>
            <person name="Reinert K."/>
            <person name="Remington K."/>
            <person name="Saunders R.D.C."/>
            <person name="Scheeler F."/>
            <person name="Shen H."/>
            <person name="Shue B.C."/>
            <person name="Siden-Kiamos I."/>
            <person name="Simpson M."/>
            <person name="Skupski M.P."/>
            <person name="Smith T.J."/>
            <person name="Spier E."/>
            <person name="Spradling A.C."/>
            <person name="Stapleton M."/>
            <person name="Strong R."/>
            <person name="Sun E."/>
            <person name="Svirskas R."/>
            <person name="Tector C."/>
            <person name="Turner R."/>
            <person name="Venter E."/>
            <person name="Wang A.H."/>
            <person name="Wang X."/>
            <person name="Wang Z.-Y."/>
            <person name="Wassarman D.A."/>
            <person name="Weinstock G.M."/>
            <person name="Weissenbach J."/>
            <person name="Williams S.M."/>
            <person name="Woodage T."/>
            <person name="Worley K.C."/>
            <person name="Wu D."/>
            <person name="Yang S."/>
            <person name="Yao Q.A."/>
            <person name="Ye J."/>
            <person name="Yeh R.-F."/>
            <person name="Zaveri J.S."/>
            <person name="Zhan M."/>
            <person name="Zhang G."/>
            <person name="Zhao Q."/>
            <person name="Zheng L."/>
            <person name="Zheng X.H."/>
            <person name="Zhong F.N."/>
            <person name="Zhong W."/>
            <person name="Zhou X."/>
            <person name="Zhu S.C."/>
            <person name="Zhu X."/>
            <person name="Smith H.O."/>
            <person name="Gibbs R.A."/>
            <person name="Myers E.W."/>
            <person name="Rubin G.M."/>
            <person name="Venter J.C."/>
        </authorList>
    </citation>
    <scope>NUCLEOTIDE SEQUENCE [LARGE SCALE GENOMIC DNA]</scope>
    <source>
        <strain evidence="12">Berkeley</strain>
    </source>
</reference>
<reference evidence="12" key="2">
    <citation type="journal article" date="2002" name="Genome Biol.">
        <title>Annotation of the Drosophila melanogaster euchromatic genome: a systematic review.</title>
        <authorList>
            <person name="Misra S."/>
            <person name="Crosby M.A."/>
            <person name="Mungall C.J."/>
            <person name="Matthews B.B."/>
            <person name="Campbell K.S."/>
            <person name="Hradecky P."/>
            <person name="Huang Y."/>
            <person name="Kaminker J.S."/>
            <person name="Millburn G.H."/>
            <person name="Prochnik S.E."/>
            <person name="Smith C.D."/>
            <person name="Tupy J.L."/>
            <person name="Whitfield E.J."/>
            <person name="Bayraktaroglu L."/>
            <person name="Berman B.P."/>
            <person name="Bettencourt B.R."/>
            <person name="Celniker S.E."/>
            <person name="de Grey A.D.N.J."/>
            <person name="Drysdale R.A."/>
            <person name="Harris N.L."/>
            <person name="Richter J."/>
            <person name="Russo S."/>
            <person name="Schroeder A.J."/>
            <person name="Shu S.Q."/>
            <person name="Stapleton M."/>
            <person name="Yamada C."/>
            <person name="Ashburner M."/>
            <person name="Gelbart W.M."/>
            <person name="Rubin G.M."/>
            <person name="Lewis S.E."/>
        </authorList>
    </citation>
    <scope>GENOME REANNOTATION</scope>
    <source>
        <strain evidence="12">Berkeley</strain>
    </source>
</reference>
<reference evidence="9 10" key="3">
    <citation type="submission" date="2004-01" db="EMBL/GenBank/DDBJ databases">
        <authorList>
            <person name="Stapleton M."/>
            <person name="Brokstein P."/>
            <person name="Hong L."/>
            <person name="Agbayani A."/>
            <person name="Carlson J."/>
            <person name="Champe M."/>
            <person name="Chavez C."/>
            <person name="Dorsett V."/>
            <person name="Dresnek D."/>
            <person name="Farfan D."/>
            <person name="Frise E."/>
            <person name="George R."/>
            <person name="Gonzalez M."/>
            <person name="Guarin H."/>
            <person name="Kronmiller B."/>
            <person name="Li P."/>
            <person name="Liao G."/>
            <person name="Miranda A."/>
            <person name="Mungall C.J."/>
            <person name="Nunoo J."/>
            <person name="Pacleb J."/>
            <person name="Paragas V."/>
            <person name="Park S."/>
            <person name="Patel S."/>
            <person name="Phouanenavong S."/>
            <person name="Wan K."/>
            <person name="Yu C."/>
            <person name="Lewis S.E."/>
            <person name="Rubin G.M."/>
            <person name="Celniker S."/>
        </authorList>
    </citation>
    <scope>NUCLEOTIDE SEQUENCE [LARGE SCALE MRNA] (ISOFORMS A AND B)</scope>
    <source>
        <strain evidence="9 10">Berkeley</strain>
    </source>
</reference>
<reference evidence="8" key="4">
    <citation type="journal article" date="2019" name="Cell Host Microbe">
        <title>Sugar Alcohols of Polyol Pathway Serve as Alarmins to Mediate Local-Systemic Innate Immune Communication in Drosophila.</title>
        <authorList>
            <person name="Yang S."/>
            <person name="Zhao Y."/>
            <person name="Yu J."/>
            <person name="Fan Z."/>
            <person name="Gong S.T."/>
            <person name="Tang H."/>
            <person name="Pan L."/>
        </authorList>
    </citation>
    <scope>FUNCTION</scope>
    <scope>INDUCTION BY GRAM-NEGATIVE BACTERIA INFECTION</scope>
    <scope>DISRUPTION PHENOTYPE</scope>
</reference>
<reference evidence="8" key="5">
    <citation type="journal article" date="2023" name="Front. Cell Dev. Biol.">
        <title>Specific prostaglandins are produced in the migratory cells and the surrounding substrate to promote Drosophila border cell migration.</title>
        <authorList>
            <person name="Mellentine S.Q."/>
            <person name="Brown H.N."/>
            <person name="Ramsey A.S."/>
            <person name="Li J."/>
            <person name="Tootle T.L."/>
        </authorList>
    </citation>
    <scope>FUNCTION</scope>
    <scope>SUBCELLULAR LOCATION</scope>
    <scope>DEVELOPMENTAL STAGE</scope>
    <scope>DISRUPTION PHENOTYPE</scope>
</reference>
<accession>M9PF61</accession>
<accession>M9PI17</accession>
<accession>Q8IQF8</accession>
<accession>Q9VTK9</accession>
<keyword id="KW-0025">Alternative splicing</keyword>
<keyword id="KW-0963">Cytoplasm</keyword>
<keyword id="KW-0521">NADP</keyword>
<keyword id="KW-0560">Oxidoreductase</keyword>
<keyword id="KW-1185">Reference proteome</keyword>
<comment type="function">
    <text evidence="1 5 6">Catalyzes the NADPH-dependent reduction of a wide variety of carbonyl-containing compounds to their corresponding alcohols. Displays enzymatic activity towards endogenous metabolites such as aromatic and aliphatic aldehydes, ketones, monosaccharides, bile acids and xenobiotics substrates. Key enzyme in the polyol pathway, catalyzes reduction of glucose to sorbitol during hyperglycemia. Reduces steroids and their derivatives and prostaglandins (By similarity). Through production of prostaglandin F2alpha may regulate the activity of non-muscle myosin II in an autocrine or paracrine fashion; influences border cell and nurse cell stiffness to facilitate border cell cluster migration (PubMed:38283991). Also regulates the cell surface localization of integrins in an autocrine or paracrine fashion; influences border cell adhesion to maintain border cell cluster morphology (PubMed:38283991). In hemocytes, probably contributes to production of sugar alcohols in the hemolymph, which act as alarmins involved in gut-fat body innate immunological communication (GFIC); leads to activation of the imd/Relish signaling pathway in the fat body (PubMed:31350199).</text>
</comment>
<comment type="catalytic activity">
    <reaction evidence="1">
        <text>an alditol + NADP(+) = an aldose + NADPH + H(+)</text>
        <dbReference type="Rhea" id="RHEA:12789"/>
        <dbReference type="Rhea" id="RHEA-COMP:9554"/>
        <dbReference type="Rhea" id="RHEA-COMP:9555"/>
        <dbReference type="ChEBI" id="CHEBI:15378"/>
        <dbReference type="ChEBI" id="CHEBI:15693"/>
        <dbReference type="ChEBI" id="CHEBI:17522"/>
        <dbReference type="ChEBI" id="CHEBI:57783"/>
        <dbReference type="ChEBI" id="CHEBI:58349"/>
        <dbReference type="EC" id="1.1.1.21"/>
    </reaction>
</comment>
<comment type="catalytic activity">
    <reaction evidence="1">
        <text>all-trans-retinol + NADP(+) = all-trans-retinal + NADPH + H(+)</text>
        <dbReference type="Rhea" id="RHEA:25033"/>
        <dbReference type="ChEBI" id="CHEBI:15378"/>
        <dbReference type="ChEBI" id="CHEBI:17336"/>
        <dbReference type="ChEBI" id="CHEBI:17898"/>
        <dbReference type="ChEBI" id="CHEBI:57783"/>
        <dbReference type="ChEBI" id="CHEBI:58349"/>
        <dbReference type="EC" id="1.1.1.300"/>
    </reaction>
</comment>
<comment type="catalytic activity">
    <reaction evidence="1">
        <text>9-cis-retinol + NADP(+) = 9-cis-retinal + NADPH + H(+)</text>
        <dbReference type="Rhea" id="RHEA:54916"/>
        <dbReference type="ChEBI" id="CHEBI:15378"/>
        <dbReference type="ChEBI" id="CHEBI:57783"/>
        <dbReference type="ChEBI" id="CHEBI:58349"/>
        <dbReference type="ChEBI" id="CHEBI:78272"/>
        <dbReference type="ChEBI" id="CHEBI:78273"/>
    </reaction>
</comment>
<comment type="catalytic activity">
    <reaction evidence="1">
        <text>13-cis-retinol + NADP(+) = 13-cis-retinal + NADPH + H(+)</text>
        <dbReference type="Rhea" id="RHEA:54920"/>
        <dbReference type="ChEBI" id="CHEBI:15378"/>
        <dbReference type="ChEBI" id="CHEBI:45479"/>
        <dbReference type="ChEBI" id="CHEBI:45487"/>
        <dbReference type="ChEBI" id="CHEBI:57783"/>
        <dbReference type="ChEBI" id="CHEBI:58349"/>
    </reaction>
</comment>
<comment type="catalytic activity">
    <reaction evidence="1">
        <text>glycerol + NADP(+) = D-glyceraldehyde + NADPH + H(+)</text>
        <dbReference type="Rhea" id="RHEA:23592"/>
        <dbReference type="ChEBI" id="CHEBI:15378"/>
        <dbReference type="ChEBI" id="CHEBI:17378"/>
        <dbReference type="ChEBI" id="CHEBI:17754"/>
        <dbReference type="ChEBI" id="CHEBI:57783"/>
        <dbReference type="ChEBI" id="CHEBI:58349"/>
        <dbReference type="EC" id="1.1.1.372"/>
    </reaction>
</comment>
<comment type="catalytic activity">
    <reaction evidence="1">
        <text>glycerol + NADP(+) = L-glyceraldehyde + NADPH + H(+)</text>
        <dbReference type="Rhea" id="RHEA:38111"/>
        <dbReference type="ChEBI" id="CHEBI:15378"/>
        <dbReference type="ChEBI" id="CHEBI:17754"/>
        <dbReference type="ChEBI" id="CHEBI:27975"/>
        <dbReference type="ChEBI" id="CHEBI:57783"/>
        <dbReference type="ChEBI" id="CHEBI:58349"/>
        <dbReference type="EC" id="1.1.1.372"/>
    </reaction>
</comment>
<comment type="catalytic activity">
    <reaction evidence="1">
        <text>prenol + NADP(+) = 3-methyl-2-butenal + NADPH + H(+)</text>
        <dbReference type="Rhea" id="RHEA:58420"/>
        <dbReference type="ChEBI" id="CHEBI:15378"/>
        <dbReference type="ChEBI" id="CHEBI:15825"/>
        <dbReference type="ChEBI" id="CHEBI:16019"/>
        <dbReference type="ChEBI" id="CHEBI:57783"/>
        <dbReference type="ChEBI" id="CHEBI:58349"/>
    </reaction>
</comment>
<comment type="catalytic activity">
    <reaction evidence="1">
        <text>(E)-hex-2-en-1-ol + NADP(+) = (E)-hex-2-enal + NADPH + H(+)</text>
        <dbReference type="Rhea" id="RHEA:58424"/>
        <dbReference type="ChEBI" id="CHEBI:15378"/>
        <dbReference type="ChEBI" id="CHEBI:28913"/>
        <dbReference type="ChEBI" id="CHEBI:57783"/>
        <dbReference type="ChEBI" id="CHEBI:58349"/>
        <dbReference type="ChEBI" id="CHEBI:141205"/>
    </reaction>
</comment>
<comment type="catalytic activity">
    <reaction evidence="1">
        <text>(E,E)-2,4-hexadien-1-ol + NADP(+) = (E,E)-2,4-hexadienal + NADPH + H(+)</text>
        <dbReference type="Rhea" id="RHEA:58428"/>
        <dbReference type="ChEBI" id="CHEBI:15378"/>
        <dbReference type="ChEBI" id="CHEBI:57783"/>
        <dbReference type="ChEBI" id="CHEBI:58349"/>
        <dbReference type="ChEBI" id="CHEBI:82334"/>
        <dbReference type="ChEBI" id="CHEBI:142625"/>
    </reaction>
</comment>
<comment type="catalytic activity">
    <reaction evidence="1">
        <text>a 4-hydroxynonen-1-ol + NADP(+) = a 4-hydroxynonenal + NADPH + H(+)</text>
        <dbReference type="Rhea" id="RHEA:58336"/>
        <dbReference type="ChEBI" id="CHEBI:15378"/>
        <dbReference type="ChEBI" id="CHEBI:57783"/>
        <dbReference type="ChEBI" id="CHEBI:58349"/>
        <dbReference type="ChEBI" id="CHEBI:142593"/>
        <dbReference type="ChEBI" id="CHEBI:142606"/>
    </reaction>
</comment>
<comment type="catalytic activity">
    <reaction evidence="1">
        <text>prostaglandin F2alpha + NADP(+) = prostaglandin H2 + NADPH + H(+)</text>
        <dbReference type="Rhea" id="RHEA:45312"/>
        <dbReference type="ChEBI" id="CHEBI:15378"/>
        <dbReference type="ChEBI" id="CHEBI:57404"/>
        <dbReference type="ChEBI" id="CHEBI:57405"/>
        <dbReference type="ChEBI" id="CHEBI:57783"/>
        <dbReference type="ChEBI" id="CHEBI:58349"/>
    </reaction>
</comment>
<comment type="catalytic activity">
    <reaction evidence="1">
        <text>allyl alcohol + NADP(+) = acrolein + NADPH + H(+)</text>
        <dbReference type="Rhea" id="RHEA:12168"/>
        <dbReference type="ChEBI" id="CHEBI:15368"/>
        <dbReference type="ChEBI" id="CHEBI:15378"/>
        <dbReference type="ChEBI" id="CHEBI:16605"/>
        <dbReference type="ChEBI" id="CHEBI:57783"/>
        <dbReference type="ChEBI" id="CHEBI:58349"/>
        <dbReference type="EC" id="1.1.1.54"/>
    </reaction>
</comment>
<comment type="catalytic activity">
    <reaction evidence="1">
        <text>pyridine 3-methanol + NADP(+) = pyridine-3-carbaldehyde + NADPH + H(+)</text>
        <dbReference type="Rhea" id="RHEA:58776"/>
        <dbReference type="ChEBI" id="CHEBI:15378"/>
        <dbReference type="ChEBI" id="CHEBI:28345"/>
        <dbReference type="ChEBI" id="CHEBI:45213"/>
        <dbReference type="ChEBI" id="CHEBI:57783"/>
        <dbReference type="ChEBI" id="CHEBI:58349"/>
    </reaction>
</comment>
<comment type="catalytic activity">
    <reaction evidence="1">
        <text>1-hexadecanoyl-2-(5-oxopentanoyl)-sn-glycero-3-phosphocholine + NADPH + H(+) = 1-hexadecanoyl-2-(5-hydroxypentanoyl)-sn-glycero-3-phosphocholine + NADP(+)</text>
        <dbReference type="Rhea" id="RHEA:58512"/>
        <dbReference type="ChEBI" id="CHEBI:15378"/>
        <dbReference type="ChEBI" id="CHEBI:57783"/>
        <dbReference type="ChEBI" id="CHEBI:58349"/>
        <dbReference type="ChEBI" id="CHEBI:77890"/>
        <dbReference type="ChEBI" id="CHEBI:142747"/>
    </reaction>
</comment>
<comment type="catalytic activity">
    <reaction evidence="1">
        <text>1-hexadecanoyl-2-(7-oxoheptanoyl)-sn-glycero-3-phosphocholine + NADPH + H(+) = 1-hexadecanoyl-2-(7-hydroxyheptanoyl)-sn-glycero-3-phosphocholine + NADP(+)</text>
        <dbReference type="Rhea" id="RHEA:58752"/>
        <dbReference type="ChEBI" id="CHEBI:15378"/>
        <dbReference type="ChEBI" id="CHEBI:57783"/>
        <dbReference type="ChEBI" id="CHEBI:58349"/>
        <dbReference type="ChEBI" id="CHEBI:134601"/>
        <dbReference type="ChEBI" id="CHEBI:142748"/>
    </reaction>
</comment>
<comment type="catalytic activity">
    <reaction evidence="1">
        <text>1-hexadecanoyl-2-(9-oxononanoyl)-sn-glycero-3-phosphocholine + NADPH + H(+) = 1-hexadecanoyl-2-(9-hydroxynonanoyl)-sn-glycero-3-phosphocholine + NADP(+)</text>
        <dbReference type="Rhea" id="RHEA:58592"/>
        <dbReference type="ChEBI" id="CHEBI:15378"/>
        <dbReference type="ChEBI" id="CHEBI:57783"/>
        <dbReference type="ChEBI" id="CHEBI:58349"/>
        <dbReference type="ChEBI" id="CHEBI:61042"/>
        <dbReference type="ChEBI" id="CHEBI:142749"/>
    </reaction>
</comment>
<comment type="catalytic activity">
    <reaction evidence="1">
        <text>1-hexadecanoyl-2-(5-oxopentanoyl)-sn-glycero-3-phosphoethanolamine + NADPH + H(+) = 1-hexadecanoyl-2-(5-hydroxypentanoyl)-sn-glycero-3-phosphoethanolamine + NADP(+)</text>
        <dbReference type="Rhea" id="RHEA:58756"/>
        <dbReference type="ChEBI" id="CHEBI:15378"/>
        <dbReference type="ChEBI" id="CHEBI:57783"/>
        <dbReference type="ChEBI" id="CHEBI:58349"/>
        <dbReference type="ChEBI" id="CHEBI:142750"/>
        <dbReference type="ChEBI" id="CHEBI:142751"/>
    </reaction>
</comment>
<comment type="subcellular location">
    <subcellularLocation>
        <location evidence="6">Cytoplasm</location>
    </subcellularLocation>
</comment>
<comment type="alternative products">
    <event type="alternative splicing"/>
    <isoform>
        <id>M9PF61-1</id>
        <name evidence="11">C</name>
        <sequence type="displayed"/>
    </isoform>
    <isoform>
        <id>M9PF61-2</id>
        <name evidence="11">D</name>
        <sequence type="described" ref="VSP_062421 VSP_062422 VSP_062423"/>
    </isoform>
    <isoform>
        <id>M9PF61-3</id>
        <name evidence="11">B</name>
        <sequence type="described" ref="VSP_062423"/>
    </isoform>
    <isoform>
        <id>M9PF61-4</id>
        <name evidence="11">A</name>
        <sequence type="described" ref="VSP_062421 VSP_062422"/>
    </isoform>
</comment>
<comment type="developmental stage">
    <text evidence="6">Expressed in both germline and somatic cells in the follicle during oogenesis.</text>
</comment>
<comment type="induction">
    <text evidence="5">By oral infection with Gram-negative bacteria; induced in hemocytes but not in the fat body.</text>
</comment>
<comment type="disruption phenotype">
    <text evidence="5 6">More compact border cell clusters that are delayed in their migration during oogenesis (PubMed:38283991). Integrins fail to localize to the cell surface in border cells (PubMed:38283991). Impaired IMD signaling pathway response in the fat body, but not in the gut, upon Gram-negative bacteria infection (PubMed:31350199). Conditional RNAi-mediated knockdown in oocyte somatic cells slightly delays border cell migration and produces a more compact border cell cluster (PubMed:38283991). Conditional RNAi-mediated knockdown in oocyte germline cells has no effect on border cell migration but results in an elongated border cell cluster (PubMed:38283991). Conditional RNAi-mediated knockdown in hemocytes reduces the gut-fat body innate immunological communication (GFIC) response to oral infection by Gram-negative bacteria; RNAi-mediated knockdown in the fat body or in the gut has no effect upon GFIC (PubMed:31350199).</text>
</comment>
<comment type="similarity">
    <text evidence="8">Belongs to the aldo/keto reductase family.</text>
</comment>